<proteinExistence type="inferred from homology"/>
<reference key="1">
    <citation type="journal article" date="2009" name="Science">
        <title>The genome sequence of taurine cattle: a window to ruminant biology and evolution.</title>
        <authorList>
            <consortium name="The bovine genome sequencing and analysis consortium"/>
        </authorList>
    </citation>
    <scope>NUCLEOTIDE SEQUENCE [LARGE SCALE GENOMIC DNA]</scope>
    <source>
        <strain>Hereford</strain>
    </source>
</reference>
<name>BI2L2_BOVIN</name>
<keyword id="KW-0965">Cell junction</keyword>
<keyword id="KW-1003">Cell membrane</keyword>
<keyword id="KW-0968">Cytoplasmic vesicle</keyword>
<keyword id="KW-0446">Lipid-binding</keyword>
<keyword id="KW-0472">Membrane</keyword>
<keyword id="KW-0597">Phosphoprotein</keyword>
<keyword id="KW-1185">Reference proteome</keyword>
<keyword id="KW-0728">SH3 domain</keyword>
<accession>E1BFE9</accession>
<sequence length="529" mass="59190">MAPEMDQFYRSTMAIYKSILEQFNPALENLVYLGNNYLRAFHALSEAAEVYFNAIQKIGEQALQSSTSQILGEILVQMSDTQRHLNSDLEVVVQTFHGDLLQHMEKNTKLDMQFIKDSRQHYEMEYRHRAANLEKSMSQLWRMERKRDKNAREMKESVNRLHAQMQAFVSESQRAAELEEKRRYRFLAEKHLLLSNTFLQFFGRARGMLQNRVLLWKEQSEASRSPSRAHSPGLLGPVLGPPYPSGRLTPTRLDMPQRALGEFGSPRSRHGSGSYGPEPAEARSASQLEPDHRRSLPRTPSASSLYSSSTQRSRSNSFGERPGGGGGGGGARRVRALVSHSEGANHTLLRFSAGDVVEVLVPEAQNGWLYGKLEGSSSSGWFPEAYVKPLDELPVNPMNPLNPVTSMNPRSPVNELPSRLRSYPLRGSHSLDDLLDRPGNSTASSDYWDGQSRSRTPSHIPSRTPSPAPTPLPSSRRSSMGSMGVASDVKKLASWEQQPPELFPRGTNPFATVKLRPTVTNDRSAPLIR</sequence>
<evidence type="ECO:0000250" key="1"/>
<evidence type="ECO:0000250" key="2">
    <source>
        <dbReference type="UniProtKB" id="Q6UXY1"/>
    </source>
</evidence>
<evidence type="ECO:0000250" key="3">
    <source>
        <dbReference type="UniProtKB" id="Q80Y61"/>
    </source>
</evidence>
<evidence type="ECO:0000255" key="4">
    <source>
        <dbReference type="PROSITE-ProRule" id="PRU00192"/>
    </source>
</evidence>
<evidence type="ECO:0000255" key="5">
    <source>
        <dbReference type="PROSITE-ProRule" id="PRU00668"/>
    </source>
</evidence>
<evidence type="ECO:0000256" key="6">
    <source>
        <dbReference type="SAM" id="MobiDB-lite"/>
    </source>
</evidence>
<feature type="chain" id="PRO_0000412902" description="BAR/IMD domain-containing adapter protein 2-like 2">
    <location>
        <begin position="1"/>
        <end position="529"/>
    </location>
</feature>
<feature type="domain" description="IMD" evidence="5">
    <location>
        <begin position="1"/>
        <end position="239"/>
    </location>
</feature>
<feature type="domain" description="SH3" evidence="4">
    <location>
        <begin position="329"/>
        <end position="392"/>
    </location>
</feature>
<feature type="region of interest" description="Disordered" evidence="6">
    <location>
        <begin position="221"/>
        <end position="332"/>
    </location>
</feature>
<feature type="region of interest" description="Disordered" evidence="6">
    <location>
        <begin position="399"/>
        <end position="529"/>
    </location>
</feature>
<feature type="compositionally biased region" description="Low complexity" evidence="6">
    <location>
        <begin position="301"/>
        <end position="317"/>
    </location>
</feature>
<feature type="compositionally biased region" description="Gly residues" evidence="6">
    <location>
        <begin position="321"/>
        <end position="331"/>
    </location>
</feature>
<feature type="compositionally biased region" description="Polar residues" evidence="6">
    <location>
        <begin position="439"/>
        <end position="459"/>
    </location>
</feature>
<feature type="compositionally biased region" description="Low complexity" evidence="6">
    <location>
        <begin position="473"/>
        <end position="484"/>
    </location>
</feature>
<feature type="modified residue" description="Phosphoserine" evidence="3">
    <location>
        <position position="231"/>
    </location>
</feature>
<feature type="modified residue" description="Phosphoserine" evidence="3">
    <location>
        <position position="272"/>
    </location>
</feature>
<feature type="modified residue" description="Phosphoserine" evidence="3">
    <location>
        <position position="304"/>
    </location>
</feature>
<feature type="modified residue" description="Phosphoserine" evidence="3">
    <location>
        <position position="479"/>
    </location>
</feature>
<feature type="modified residue" description="Phosphoserine" evidence="3">
    <location>
        <position position="482"/>
    </location>
</feature>
<organism>
    <name type="scientific">Bos taurus</name>
    <name type="common">Bovine</name>
    <dbReference type="NCBI Taxonomy" id="9913"/>
    <lineage>
        <taxon>Eukaryota</taxon>
        <taxon>Metazoa</taxon>
        <taxon>Chordata</taxon>
        <taxon>Craniata</taxon>
        <taxon>Vertebrata</taxon>
        <taxon>Euteleostomi</taxon>
        <taxon>Mammalia</taxon>
        <taxon>Eutheria</taxon>
        <taxon>Laurasiatheria</taxon>
        <taxon>Artiodactyla</taxon>
        <taxon>Ruminantia</taxon>
        <taxon>Pecora</taxon>
        <taxon>Bovidae</taxon>
        <taxon>Bovinae</taxon>
        <taxon>Bos</taxon>
    </lineage>
</organism>
<protein>
    <recommendedName>
        <fullName evidence="2">BAR/IMD domain-containing adapter protein 2-like 2</fullName>
    </recommendedName>
    <alternativeName>
        <fullName>Brain-specific angiogenesis inhibitor 1-associated protein 2-like protein 2</fullName>
        <shortName>BAI1-associated protein 2-like protein 2</shortName>
    </alternativeName>
    <alternativeName>
        <fullName>Planar intestinal- and kidney-specific BAR domain protein</fullName>
        <shortName>Pinkbar</shortName>
    </alternativeName>
</protein>
<comment type="function">
    <text evidence="1">Phosphoinositides-binding protein that induces the formation of planar or gently curved membrane structures. Binds to phosphoinositides, including to phosphatidylinositol 4,5-bisphosphate (PtdIns(4,5)P2) headgroups. There seems to be no clear preference for a specific phosphoinositide (By similarity).</text>
</comment>
<comment type="subcellular location">
    <subcellularLocation>
        <location evidence="1">Cell membrane</location>
        <topology evidence="1">Peripheral membrane protein</topology>
    </subcellularLocation>
    <subcellularLocation>
        <location evidence="1">Cell junction</location>
    </subcellularLocation>
    <subcellularLocation>
        <location evidence="1">Cytoplasmic vesicle membrane</location>
    </subcellularLocation>
    <text evidence="1">Localizes to RAB13-positive vesicles and to the plasma membrane at intercellular contacts.</text>
</comment>
<comment type="domain">
    <text evidence="1">The IMD domain consisting of an antiparallel dimer of three-helix bundles, featuring on one side a positively charged. The N-terminal alpha-helix inserts into the lipid bilayer. Also forms homodimers and homooligomers. The residue Trp-141 is essential for oligomer formation (By similarity).</text>
</comment>
<dbReference type="EMBL" id="AAFC03031682">
    <property type="status" value="NOT_ANNOTATED_CDS"/>
    <property type="molecule type" value="Genomic_DNA"/>
</dbReference>
<dbReference type="EMBL" id="AAFC03051115">
    <property type="status" value="NOT_ANNOTATED_CDS"/>
    <property type="molecule type" value="Genomic_DNA"/>
</dbReference>
<dbReference type="SMR" id="E1BFE9"/>
<dbReference type="FunCoup" id="E1BFE9">
    <property type="interactions" value="11"/>
</dbReference>
<dbReference type="STRING" id="9913.ENSBTAP00000020331"/>
<dbReference type="PaxDb" id="9913-ENSBTAP00000020331"/>
<dbReference type="eggNOG" id="ENOG502QW6V">
    <property type="taxonomic scope" value="Eukaryota"/>
</dbReference>
<dbReference type="HOGENOM" id="CLU_025877_1_1_1"/>
<dbReference type="InParanoid" id="E1BFE9"/>
<dbReference type="TreeFam" id="TF325648"/>
<dbReference type="Proteomes" id="UP000009136">
    <property type="component" value="Unplaced"/>
</dbReference>
<dbReference type="GO" id="GO:0070161">
    <property type="term" value="C:anchoring junction"/>
    <property type="evidence" value="ECO:0007669"/>
    <property type="project" value="UniProtKB-SubCell"/>
</dbReference>
<dbReference type="GO" id="GO:0030659">
    <property type="term" value="C:cytoplasmic vesicle membrane"/>
    <property type="evidence" value="ECO:0007669"/>
    <property type="project" value="UniProtKB-SubCell"/>
</dbReference>
<dbReference type="GO" id="GO:0005829">
    <property type="term" value="C:cytosol"/>
    <property type="evidence" value="ECO:0000318"/>
    <property type="project" value="GO_Central"/>
</dbReference>
<dbReference type="GO" id="GO:0005654">
    <property type="term" value="C:nucleoplasm"/>
    <property type="evidence" value="ECO:0000318"/>
    <property type="project" value="GO_Central"/>
</dbReference>
<dbReference type="GO" id="GO:0005886">
    <property type="term" value="C:plasma membrane"/>
    <property type="evidence" value="ECO:0007669"/>
    <property type="project" value="UniProtKB-SubCell"/>
</dbReference>
<dbReference type="GO" id="GO:0008289">
    <property type="term" value="F:lipid binding"/>
    <property type="evidence" value="ECO:0007669"/>
    <property type="project" value="UniProtKB-KW"/>
</dbReference>
<dbReference type="GO" id="GO:0051764">
    <property type="term" value="P:actin crosslink formation"/>
    <property type="evidence" value="ECO:0000318"/>
    <property type="project" value="GO_Central"/>
</dbReference>
<dbReference type="GO" id="GO:0051017">
    <property type="term" value="P:actin filament bundle assembly"/>
    <property type="evidence" value="ECO:0000318"/>
    <property type="project" value="GO_Central"/>
</dbReference>
<dbReference type="GO" id="GO:0007009">
    <property type="term" value="P:plasma membrane organization"/>
    <property type="evidence" value="ECO:0007669"/>
    <property type="project" value="InterPro"/>
</dbReference>
<dbReference type="GO" id="GO:0030838">
    <property type="term" value="P:positive regulation of actin filament polymerization"/>
    <property type="evidence" value="ECO:0000318"/>
    <property type="project" value="GO_Central"/>
</dbReference>
<dbReference type="CDD" id="cd07644">
    <property type="entry name" value="I-BAR_IMD_BAIAP2L2"/>
    <property type="match status" value="1"/>
</dbReference>
<dbReference type="CDD" id="cd11914">
    <property type="entry name" value="SH3_BAIAP2L2"/>
    <property type="match status" value="1"/>
</dbReference>
<dbReference type="FunFam" id="1.20.1270.60:FF:000056">
    <property type="entry name" value="brain-specific angiogenesis inhibitor 1-associated protein 2-like protein 2"/>
    <property type="match status" value="1"/>
</dbReference>
<dbReference type="FunFam" id="2.30.30.40:FF:000185">
    <property type="entry name" value="brain-specific angiogenesis inhibitor 1-associated protein 2-like protein 2"/>
    <property type="match status" value="1"/>
</dbReference>
<dbReference type="Gene3D" id="1.20.1270.60">
    <property type="entry name" value="Arfaptin homology (AH) domain/BAR domain"/>
    <property type="match status" value="1"/>
</dbReference>
<dbReference type="Gene3D" id="2.30.30.40">
    <property type="entry name" value="SH3 Domains"/>
    <property type="match status" value="1"/>
</dbReference>
<dbReference type="InterPro" id="IPR027267">
    <property type="entry name" value="AH/BAR_dom_sf"/>
</dbReference>
<dbReference type="InterPro" id="IPR030126">
    <property type="entry name" value="Baiap2l2_I-BAR_dom"/>
</dbReference>
<dbReference type="InterPro" id="IPR013606">
    <property type="entry name" value="I-BAR_dom"/>
</dbReference>
<dbReference type="InterPro" id="IPR027681">
    <property type="entry name" value="IRSp53/IRTKS/Pinkbar"/>
</dbReference>
<dbReference type="InterPro" id="IPR035593">
    <property type="entry name" value="Pinkbar_SH3"/>
</dbReference>
<dbReference type="InterPro" id="IPR036028">
    <property type="entry name" value="SH3-like_dom_sf"/>
</dbReference>
<dbReference type="InterPro" id="IPR001452">
    <property type="entry name" value="SH3_domain"/>
</dbReference>
<dbReference type="PANTHER" id="PTHR14206">
    <property type="entry name" value="BRAIN-SPECIFIC ANGIOGENESIS INHIBITOR 1-ASSOCIATED PROTEIN 2"/>
    <property type="match status" value="1"/>
</dbReference>
<dbReference type="PANTHER" id="PTHR14206:SF5">
    <property type="entry name" value="BRAIN-SPECIFIC ANGIOGENESIS INHIBITOR 1-ASSOCIATED PROTEIN 2-LIKE PROTEIN 2"/>
    <property type="match status" value="1"/>
</dbReference>
<dbReference type="Pfam" id="PF08397">
    <property type="entry name" value="IMD"/>
    <property type="match status" value="1"/>
</dbReference>
<dbReference type="Pfam" id="PF14604">
    <property type="entry name" value="SH3_9"/>
    <property type="match status" value="1"/>
</dbReference>
<dbReference type="SMART" id="SM00326">
    <property type="entry name" value="SH3"/>
    <property type="match status" value="1"/>
</dbReference>
<dbReference type="SUPFAM" id="SSF103657">
    <property type="entry name" value="BAR/IMD domain-like"/>
    <property type="match status" value="1"/>
</dbReference>
<dbReference type="SUPFAM" id="SSF50044">
    <property type="entry name" value="SH3-domain"/>
    <property type="match status" value="1"/>
</dbReference>
<dbReference type="PROSITE" id="PS51338">
    <property type="entry name" value="IMD"/>
    <property type="match status" value="1"/>
</dbReference>
<dbReference type="PROSITE" id="PS50002">
    <property type="entry name" value="SH3"/>
    <property type="match status" value="1"/>
</dbReference>
<gene>
    <name type="primary">BAIAP2L2</name>
</gene>